<evidence type="ECO:0000250" key="1">
    <source>
        <dbReference type="UniProtKB" id="P02820"/>
    </source>
</evidence>
<evidence type="ECO:0000250" key="2">
    <source>
        <dbReference type="UniProtKB" id="P86546"/>
    </source>
</evidence>
<evidence type="ECO:0000255" key="3">
    <source>
        <dbReference type="PROSITE-ProRule" id="PRU00463"/>
    </source>
</evidence>
<evidence type="ECO:0000269" key="4">
    <source>
    </source>
</evidence>
<evidence type="ECO:0000269" key="5">
    <source>
    </source>
</evidence>
<evidence type="ECO:0000269" key="6">
    <source ref="3"/>
</evidence>
<evidence type="ECO:0000303" key="7">
    <source>
    </source>
</evidence>
<evidence type="ECO:0000305" key="8"/>
<evidence type="ECO:0000305" key="9">
    <source>
    </source>
</evidence>
<protein>
    <recommendedName>
        <fullName>Osteocalcin</fullName>
    </recommendedName>
    <alternativeName>
        <fullName evidence="7">Bone Gla protein</fullName>
        <shortName>BGP</shortName>
    </alternativeName>
    <alternativeName>
        <fullName>Gamma-carboxyglutamic acid-containing protein</fullName>
    </alternativeName>
</protein>
<proteinExistence type="evidence at protein level"/>
<organism>
    <name type="scientific">Homo sapiens</name>
    <name type="common">Human</name>
    <dbReference type="NCBI Taxonomy" id="9606"/>
    <lineage>
        <taxon>Eukaryota</taxon>
        <taxon>Metazoa</taxon>
        <taxon>Chordata</taxon>
        <taxon>Craniata</taxon>
        <taxon>Vertebrata</taxon>
        <taxon>Euteleostomi</taxon>
        <taxon>Mammalia</taxon>
        <taxon>Eutheria</taxon>
        <taxon>Euarchontoglires</taxon>
        <taxon>Primates</taxon>
        <taxon>Haplorrhini</taxon>
        <taxon>Catarrhini</taxon>
        <taxon>Hominidae</taxon>
        <taxon>Homo</taxon>
    </lineage>
</organism>
<accession>P02818</accession>
<accession>Q5TCK6</accession>
<sequence length="100" mass="10963">MRALTLLALLALAALCIAGQAGAKPSGAESSKGAAFVSKQEGSEVVKRPRRYLYQWLGAPVPYPDPLEPRREVCELNPDCDELADHIGFQEAYRRFYGPV</sequence>
<comment type="function">
    <text evidence="2 4 5">Bone protein that constitutes 1-2% of the total bone protein, and which acts as a negative regulator of bone formation (PubMed:3019668, PubMed:6967872). Functions to limit bone formation without impairing bone resorption or mineralization (By similarity). It binds strongly to apatite and calcium (PubMed:6967872).</text>
</comment>
<comment type="function">
    <text evidence="2">The uncarboxylated form acts as a hormone secreted by osteoblasts, which regulates different cellular processes, such as energy metabolism, male fertility and brain development. Regulates of energy metabolism by acting as a hormone favoring pancreatic beta-cell proliferation, insulin secretion and sensitivity and energy expenditure. Uncarboxylated osteocalcin hormone also promotes testosterone production in the testes: acts as a ligand for G protein-coupled receptor GPRC6A at the surface of Leydig cells, initiating a signaling response that promotes the expression of enzymes required for testosterone synthesis in a CREB-dependent manner. Also acts as a regulator of brain development: osteocalcin hormone crosses the blood-brain barrier and acts as a ligand for GPR158 on neurons, initiating a signaling response that prevents neuronal apoptosis in the hippocampus, favors the synthesis of all monoamine neurotransmitters and inhibits that of gamma-aminobutyric acid (GABA). Osteocalcin also crosses the placenta during pregnancy and maternal osteocalcin is required for fetal brain development.</text>
</comment>
<comment type="interaction">
    <interactant intactId="EBI-12927282">
        <id>P02818</id>
    </interactant>
    <interactant intactId="EBI-12092171">
        <id>Q12797-6</id>
        <label>ASPH</label>
    </interactant>
    <organismsDiffer>false</organismsDiffer>
    <experiments>3</experiments>
</comment>
<comment type="subcellular location">
    <subcellularLocation>
        <location evidence="5">Secreted</location>
    </subcellularLocation>
</comment>
<comment type="PTM">
    <text evidence="2 3 5">Gamma-carboxyglutamate residues are formed by vitamin K dependent carboxylation by GGCX. These residues are essential for the binding of calcium (By similarity) (PubMed:6967872). Decarboxylation promotes the hormone activity (By similarity).</text>
</comment>
<comment type="similarity">
    <text evidence="8">Belongs to the osteocalcin/matrix Gla protein family.</text>
</comment>
<comment type="online information" name="Wikipedia">
    <link uri="https://en.wikipedia.org/wiki/Osteocalcin"/>
    <text>Osteocalcin entry</text>
</comment>
<dbReference type="EMBL" id="X04143">
    <property type="protein sequence ID" value="CAA27763.1"/>
    <property type="molecule type" value="Genomic_DNA"/>
</dbReference>
<dbReference type="EMBL" id="X53698">
    <property type="protein sequence ID" value="CAA37736.1"/>
    <property type="molecule type" value="mRNA"/>
</dbReference>
<dbReference type="EMBL" id="X51699">
    <property type="protein sequence ID" value="CAA35996.1"/>
    <property type="molecule type" value="mRNA"/>
</dbReference>
<dbReference type="EMBL" id="DQ007079">
    <property type="protein sequence ID" value="AAY16981.1"/>
    <property type="molecule type" value="Genomic_DNA"/>
</dbReference>
<dbReference type="EMBL" id="AL135927">
    <property type="status" value="NOT_ANNOTATED_CDS"/>
    <property type="molecule type" value="Genomic_DNA"/>
</dbReference>
<dbReference type="EMBL" id="CH471121">
    <property type="protein sequence ID" value="EAW52986.1"/>
    <property type="molecule type" value="Genomic_DNA"/>
</dbReference>
<dbReference type="EMBL" id="BC113432">
    <property type="protein sequence ID" value="AAI13433.1"/>
    <property type="molecule type" value="mRNA"/>
</dbReference>
<dbReference type="EMBL" id="BC113434">
    <property type="protein sequence ID" value="AAI13435.1"/>
    <property type="molecule type" value="mRNA"/>
</dbReference>
<dbReference type="CCDS" id="CCDS1134.1"/>
<dbReference type="PIR" id="S12652">
    <property type="entry name" value="GEHU"/>
</dbReference>
<dbReference type="RefSeq" id="NP_954642.1">
    <property type="nucleotide sequence ID" value="NM_199173.6"/>
</dbReference>
<dbReference type="PDB" id="8XS1">
    <property type="method" value="X-ray"/>
    <property type="resolution" value="2.30 A"/>
    <property type="chains" value="A=94-100"/>
</dbReference>
<dbReference type="PDB" id="9BUR">
    <property type="method" value="EM"/>
    <property type="resolution" value="2.95 A"/>
    <property type="chains" value="B=1-100"/>
</dbReference>
<dbReference type="PDB" id="9BUX">
    <property type="method" value="EM"/>
    <property type="resolution" value="3.06 A"/>
    <property type="chains" value="B=1-100"/>
</dbReference>
<dbReference type="PDBsum" id="8XS1"/>
<dbReference type="PDBsum" id="9BUR"/>
<dbReference type="PDBsum" id="9BUX"/>
<dbReference type="EMDB" id="EMD-44917"/>
<dbReference type="EMDB" id="EMD-44924"/>
<dbReference type="SMR" id="P02818"/>
<dbReference type="BioGRID" id="107101">
    <property type="interactions" value="16"/>
</dbReference>
<dbReference type="FunCoup" id="P02818">
    <property type="interactions" value="113"/>
</dbReference>
<dbReference type="IntAct" id="P02818">
    <property type="interactions" value="6"/>
</dbReference>
<dbReference type="STRING" id="9606.ENSP00000357255"/>
<dbReference type="DrugBank" id="DB03847">
    <property type="generic name" value="gamma-carboxy-L-glutamic acid"/>
</dbReference>
<dbReference type="DrugBank" id="DB00170">
    <property type="generic name" value="Menadione"/>
</dbReference>
<dbReference type="DrugBank" id="DB01022">
    <property type="generic name" value="Phylloquinone"/>
</dbReference>
<dbReference type="BioMuta" id="BGLAP"/>
<dbReference type="DMDM" id="129253"/>
<dbReference type="MassIVE" id="P02818"/>
<dbReference type="PaxDb" id="9606-ENSP00000357255"/>
<dbReference type="PeptideAtlas" id="P02818"/>
<dbReference type="ProteomicsDB" id="51606"/>
<dbReference type="ABCD" id="P02818">
    <property type="antibodies" value="5 sequenced antibodies"/>
</dbReference>
<dbReference type="Antibodypedia" id="34848">
    <property type="antibodies" value="997 antibodies from 42 providers"/>
</dbReference>
<dbReference type="DNASU" id="632"/>
<dbReference type="Ensembl" id="ENST00000368272.5">
    <property type="protein sequence ID" value="ENSP00000357255.4"/>
    <property type="gene ID" value="ENSG00000242252.2"/>
</dbReference>
<dbReference type="GeneID" id="632"/>
<dbReference type="KEGG" id="hsa:632"/>
<dbReference type="MANE-Select" id="ENST00000368272.5">
    <property type="protein sequence ID" value="ENSP00000357255.4"/>
    <property type="RefSeq nucleotide sequence ID" value="NM_199173.6"/>
    <property type="RefSeq protein sequence ID" value="NP_954642.1"/>
</dbReference>
<dbReference type="UCSC" id="uc001fnt.4">
    <property type="organism name" value="human"/>
</dbReference>
<dbReference type="AGR" id="HGNC:1043"/>
<dbReference type="CTD" id="632"/>
<dbReference type="DisGeNET" id="632"/>
<dbReference type="GeneCards" id="BGLAP"/>
<dbReference type="HGNC" id="HGNC:1043">
    <property type="gene designation" value="BGLAP"/>
</dbReference>
<dbReference type="HPA" id="ENSG00000242252">
    <property type="expression patterns" value="Tissue enhanced (choroid plexus, intestine)"/>
</dbReference>
<dbReference type="MIM" id="112260">
    <property type="type" value="gene"/>
</dbReference>
<dbReference type="neXtProt" id="NX_P02818"/>
<dbReference type="OpenTargets" id="ENSG00000242252"/>
<dbReference type="PharmGKB" id="PA25345"/>
<dbReference type="VEuPathDB" id="HostDB:ENSG00000242252"/>
<dbReference type="eggNOG" id="ENOG502S85I">
    <property type="taxonomic scope" value="Eukaryota"/>
</dbReference>
<dbReference type="GeneTree" id="ENSGT00410000026290"/>
<dbReference type="HOGENOM" id="CLU_160110_0_0_1"/>
<dbReference type="InParanoid" id="P02818"/>
<dbReference type="OMA" id="MDTEGII"/>
<dbReference type="OrthoDB" id="9950568at2759"/>
<dbReference type="PAN-GO" id="P02818">
    <property type="GO annotations" value="6 GO annotations based on evolutionary models"/>
</dbReference>
<dbReference type="PhylomeDB" id="P02818"/>
<dbReference type="TreeFam" id="TF330920"/>
<dbReference type="PathwayCommons" id="P02818"/>
<dbReference type="Reactome" id="R-HSA-159740">
    <property type="pathway name" value="Gamma-carboxylation of protein precursors"/>
</dbReference>
<dbReference type="Reactome" id="R-HSA-159763">
    <property type="pathway name" value="Transport of gamma-carboxylated protein precursors from the endoplasmic reticulum to the Golgi apparatus"/>
</dbReference>
<dbReference type="Reactome" id="R-HSA-159782">
    <property type="pathway name" value="Removal of aminoterminal propeptides from gamma-carboxylated proteins"/>
</dbReference>
<dbReference type="Reactome" id="R-HSA-8940973">
    <property type="pathway name" value="RUNX2 regulates osteoblast differentiation"/>
</dbReference>
<dbReference type="SignaLink" id="P02818"/>
<dbReference type="SIGNOR" id="P02818"/>
<dbReference type="BioGRID-ORCS" id="632">
    <property type="hits" value="22 hits in 1149 CRISPR screens"/>
</dbReference>
<dbReference type="GeneWiki" id="Osteocalcin"/>
<dbReference type="GenomeRNAi" id="632"/>
<dbReference type="Pharos" id="P02818">
    <property type="development level" value="Tbio"/>
</dbReference>
<dbReference type="PRO" id="PR:P02818"/>
<dbReference type="Proteomes" id="UP000005640">
    <property type="component" value="Chromosome 1"/>
</dbReference>
<dbReference type="RNAct" id="P02818">
    <property type="molecule type" value="protein"/>
</dbReference>
<dbReference type="Bgee" id="ENSG00000242252">
    <property type="expression patterns" value="Expressed in male germ line stem cell (sensu Vertebrata) in testis and 94 other cell types or tissues"/>
</dbReference>
<dbReference type="GO" id="GO:0005737">
    <property type="term" value="C:cytoplasm"/>
    <property type="evidence" value="ECO:0000314"/>
    <property type="project" value="UniProtKB"/>
</dbReference>
<dbReference type="GO" id="GO:0030425">
    <property type="term" value="C:dendrite"/>
    <property type="evidence" value="ECO:0007669"/>
    <property type="project" value="Ensembl"/>
</dbReference>
<dbReference type="GO" id="GO:0005788">
    <property type="term" value="C:endoplasmic reticulum lumen"/>
    <property type="evidence" value="ECO:0000304"/>
    <property type="project" value="Reactome"/>
</dbReference>
<dbReference type="GO" id="GO:0005576">
    <property type="term" value="C:extracellular region"/>
    <property type="evidence" value="ECO:0000250"/>
    <property type="project" value="UniProt"/>
</dbReference>
<dbReference type="GO" id="GO:0005615">
    <property type="term" value="C:extracellular space"/>
    <property type="evidence" value="ECO:0007669"/>
    <property type="project" value="Ensembl"/>
</dbReference>
<dbReference type="GO" id="GO:0005796">
    <property type="term" value="C:Golgi lumen"/>
    <property type="evidence" value="ECO:0000304"/>
    <property type="project" value="Reactome"/>
</dbReference>
<dbReference type="GO" id="GO:0043204">
    <property type="term" value="C:perikaryon"/>
    <property type="evidence" value="ECO:0007669"/>
    <property type="project" value="Ensembl"/>
</dbReference>
<dbReference type="GO" id="GO:0031982">
    <property type="term" value="C:vesicle"/>
    <property type="evidence" value="ECO:0007669"/>
    <property type="project" value="Ensembl"/>
</dbReference>
<dbReference type="GO" id="GO:0005509">
    <property type="term" value="F:calcium ion binding"/>
    <property type="evidence" value="ECO:0007669"/>
    <property type="project" value="InterPro"/>
</dbReference>
<dbReference type="GO" id="GO:0005179">
    <property type="term" value="F:hormone activity"/>
    <property type="evidence" value="ECO:0000250"/>
    <property type="project" value="UniProtKB"/>
</dbReference>
<dbReference type="GO" id="GO:0046848">
    <property type="term" value="F:hydroxyapatite binding"/>
    <property type="evidence" value="ECO:0000318"/>
    <property type="project" value="GO_Central"/>
</dbReference>
<dbReference type="GO" id="GO:0008147">
    <property type="term" value="F:structural constituent of bone"/>
    <property type="evidence" value="ECO:0000250"/>
    <property type="project" value="UniProtKB"/>
</dbReference>
<dbReference type="GO" id="GO:0005198">
    <property type="term" value="F:structural molecule activity"/>
    <property type="evidence" value="ECO:0000303"/>
    <property type="project" value="ProtInc"/>
</dbReference>
<dbReference type="GO" id="GO:0060348">
    <property type="term" value="P:bone development"/>
    <property type="evidence" value="ECO:0000318"/>
    <property type="project" value="GO_Central"/>
</dbReference>
<dbReference type="GO" id="GO:0030282">
    <property type="term" value="P:bone mineralization"/>
    <property type="evidence" value="ECO:0000303"/>
    <property type="project" value="UniProtKB"/>
</dbReference>
<dbReference type="GO" id="GO:0007420">
    <property type="term" value="P:brain development"/>
    <property type="evidence" value="ECO:0000250"/>
    <property type="project" value="UniProtKB"/>
</dbReference>
<dbReference type="GO" id="GO:0007155">
    <property type="term" value="P:cell adhesion"/>
    <property type="evidence" value="ECO:0000303"/>
    <property type="project" value="UniProtKB"/>
</dbReference>
<dbReference type="GO" id="GO:0071363">
    <property type="term" value="P:cellular response to growth factor stimulus"/>
    <property type="evidence" value="ECO:0007669"/>
    <property type="project" value="Ensembl"/>
</dbReference>
<dbReference type="GO" id="GO:0032869">
    <property type="term" value="P:cellular response to insulin stimulus"/>
    <property type="evidence" value="ECO:0000250"/>
    <property type="project" value="UniProtKB"/>
</dbReference>
<dbReference type="GO" id="GO:0071305">
    <property type="term" value="P:cellular response to vitamin D"/>
    <property type="evidence" value="ECO:0007669"/>
    <property type="project" value="Ensembl"/>
</dbReference>
<dbReference type="GO" id="GO:0034224">
    <property type="term" value="P:cellular response to zinc ion starvation"/>
    <property type="evidence" value="ECO:0007669"/>
    <property type="project" value="Ensembl"/>
</dbReference>
<dbReference type="GO" id="GO:0050890">
    <property type="term" value="P:cognition"/>
    <property type="evidence" value="ECO:0000250"/>
    <property type="project" value="UniProtKB"/>
</dbReference>
<dbReference type="GO" id="GO:0042593">
    <property type="term" value="P:glucose homeostasis"/>
    <property type="evidence" value="ECO:0000250"/>
    <property type="project" value="UniProtKB"/>
</dbReference>
<dbReference type="GO" id="GO:0007611">
    <property type="term" value="P:learning or memory"/>
    <property type="evidence" value="ECO:0000250"/>
    <property type="project" value="UniProtKB"/>
</dbReference>
<dbReference type="GO" id="GO:1903011">
    <property type="term" value="P:negative regulation of bone development"/>
    <property type="evidence" value="ECO:0000250"/>
    <property type="project" value="UniProtKB"/>
</dbReference>
<dbReference type="GO" id="GO:0002076">
    <property type="term" value="P:osteoblast development"/>
    <property type="evidence" value="ECO:0007669"/>
    <property type="project" value="Ensembl"/>
</dbReference>
<dbReference type="GO" id="GO:0001649">
    <property type="term" value="P:osteoblast differentiation"/>
    <property type="evidence" value="ECO:0000270"/>
    <property type="project" value="BHF-UCL"/>
</dbReference>
<dbReference type="GO" id="GO:0001956">
    <property type="term" value="P:positive regulation of neurotransmitter secretion"/>
    <property type="evidence" value="ECO:0000250"/>
    <property type="project" value="UniProtKB"/>
</dbReference>
<dbReference type="GO" id="GO:0030500">
    <property type="term" value="P:regulation of bone mineralization"/>
    <property type="evidence" value="ECO:0007669"/>
    <property type="project" value="InterPro"/>
</dbReference>
<dbReference type="GO" id="GO:0045124">
    <property type="term" value="P:regulation of bone resorption"/>
    <property type="evidence" value="ECO:0000303"/>
    <property type="project" value="UniProtKB"/>
</dbReference>
<dbReference type="GO" id="GO:1900076">
    <property type="term" value="P:regulation of cellular response to insulin stimulus"/>
    <property type="evidence" value="ECO:0007669"/>
    <property type="project" value="InterPro"/>
</dbReference>
<dbReference type="GO" id="GO:0045670">
    <property type="term" value="P:regulation of osteoclast differentiation"/>
    <property type="evidence" value="ECO:0000303"/>
    <property type="project" value="UniProtKB"/>
</dbReference>
<dbReference type="GO" id="GO:2000224">
    <property type="term" value="P:regulation of testosterone biosynthetic process"/>
    <property type="evidence" value="ECO:0000250"/>
    <property type="project" value="UniProtKB"/>
</dbReference>
<dbReference type="GO" id="GO:0014823">
    <property type="term" value="P:response to activity"/>
    <property type="evidence" value="ECO:0007669"/>
    <property type="project" value="Ensembl"/>
</dbReference>
<dbReference type="GO" id="GO:0043627">
    <property type="term" value="P:response to estrogen"/>
    <property type="evidence" value="ECO:0007669"/>
    <property type="project" value="Ensembl"/>
</dbReference>
<dbReference type="GO" id="GO:0045471">
    <property type="term" value="P:response to ethanol"/>
    <property type="evidence" value="ECO:0007669"/>
    <property type="project" value="Ensembl"/>
</dbReference>
<dbReference type="GO" id="GO:0051384">
    <property type="term" value="P:response to glucocorticoid"/>
    <property type="evidence" value="ECO:0007669"/>
    <property type="project" value="Ensembl"/>
</dbReference>
<dbReference type="GO" id="GO:0009629">
    <property type="term" value="P:response to gravity"/>
    <property type="evidence" value="ECO:0007669"/>
    <property type="project" value="Ensembl"/>
</dbReference>
<dbReference type="GO" id="GO:0033594">
    <property type="term" value="P:response to hydroxyisoflavone"/>
    <property type="evidence" value="ECO:0007669"/>
    <property type="project" value="Ensembl"/>
</dbReference>
<dbReference type="GO" id="GO:0036005">
    <property type="term" value="P:response to macrophage colony-stimulating factor"/>
    <property type="evidence" value="ECO:0007669"/>
    <property type="project" value="Ensembl"/>
</dbReference>
<dbReference type="GO" id="GO:0009612">
    <property type="term" value="P:response to mechanical stimulus"/>
    <property type="evidence" value="ECO:0007669"/>
    <property type="project" value="Ensembl"/>
</dbReference>
<dbReference type="GO" id="GO:0033574">
    <property type="term" value="P:response to testosterone"/>
    <property type="evidence" value="ECO:0007669"/>
    <property type="project" value="Ensembl"/>
</dbReference>
<dbReference type="GO" id="GO:0033280">
    <property type="term" value="P:response to vitamin D"/>
    <property type="evidence" value="ECO:0000270"/>
    <property type="project" value="BHF-UCL"/>
</dbReference>
<dbReference type="GO" id="GO:0032571">
    <property type="term" value="P:response to vitamin K"/>
    <property type="evidence" value="ECO:0007669"/>
    <property type="project" value="Ensembl"/>
</dbReference>
<dbReference type="GO" id="GO:0009410">
    <property type="term" value="P:response to xenobiotic stimulus"/>
    <property type="evidence" value="ECO:0007669"/>
    <property type="project" value="Ensembl"/>
</dbReference>
<dbReference type="GO" id="GO:0010043">
    <property type="term" value="P:response to zinc ion"/>
    <property type="evidence" value="ECO:0007669"/>
    <property type="project" value="Ensembl"/>
</dbReference>
<dbReference type="GO" id="GO:0001501">
    <property type="term" value="P:skeletal system development"/>
    <property type="evidence" value="ECO:0000304"/>
    <property type="project" value="ProtInc"/>
</dbReference>
<dbReference type="GO" id="GO:0048863">
    <property type="term" value="P:stem cell differentiation"/>
    <property type="evidence" value="ECO:0007669"/>
    <property type="project" value="Ensembl"/>
</dbReference>
<dbReference type="GO" id="GO:0044342">
    <property type="term" value="P:type B pancreatic cell proliferation"/>
    <property type="evidence" value="ECO:0000250"/>
    <property type="project" value="UniProtKB"/>
</dbReference>
<dbReference type="InterPro" id="IPR035972">
    <property type="entry name" value="GLA-like_dom_SF"/>
</dbReference>
<dbReference type="InterPro" id="IPR000294">
    <property type="entry name" value="GLA_domain"/>
</dbReference>
<dbReference type="InterPro" id="IPR039176">
    <property type="entry name" value="Osteocalcin"/>
</dbReference>
<dbReference type="InterPro" id="IPR002384">
    <property type="entry name" value="Osteocalcin/MGP"/>
</dbReference>
<dbReference type="PANTHER" id="PTHR14235">
    <property type="entry name" value="OSTEOCALCIN"/>
    <property type="match status" value="1"/>
</dbReference>
<dbReference type="PANTHER" id="PTHR14235:SF0">
    <property type="entry name" value="OSTEOCALCIN"/>
    <property type="match status" value="1"/>
</dbReference>
<dbReference type="PRINTS" id="PR00002">
    <property type="entry name" value="GLABONE"/>
</dbReference>
<dbReference type="SMART" id="SM00069">
    <property type="entry name" value="GLA"/>
    <property type="match status" value="1"/>
</dbReference>
<dbReference type="SUPFAM" id="SSF57630">
    <property type="entry name" value="GLA-domain"/>
    <property type="match status" value="1"/>
</dbReference>
<dbReference type="PROSITE" id="PS00011">
    <property type="entry name" value="GLA_1"/>
    <property type="match status" value="1"/>
</dbReference>
<dbReference type="PROSITE" id="PS50998">
    <property type="entry name" value="GLA_2"/>
    <property type="match status" value="1"/>
</dbReference>
<keyword id="KW-0002">3D-structure</keyword>
<keyword id="KW-0091">Biomineralization</keyword>
<keyword id="KW-0106">Calcium</keyword>
<keyword id="KW-0165">Cleavage on pair of basic residues</keyword>
<keyword id="KW-0903">Direct protein sequencing</keyword>
<keyword id="KW-1015">Disulfide bond</keyword>
<keyword id="KW-0301">Gamma-carboxyglutamic acid</keyword>
<keyword id="KW-0372">Hormone</keyword>
<keyword id="KW-0479">Metal-binding</keyword>
<keyword id="KW-1267">Proteomics identification</keyword>
<keyword id="KW-1185">Reference proteome</keyword>
<keyword id="KW-0964">Secreted</keyword>
<keyword id="KW-0732">Signal</keyword>
<feature type="signal peptide" evidence="8">
    <location>
        <begin position="1"/>
        <end position="23"/>
    </location>
</feature>
<feature type="propeptide" id="PRO_0000011086" evidence="9">
    <location>
        <begin position="24"/>
        <end position="51"/>
    </location>
</feature>
<feature type="chain" id="PRO_0000011087" description="Osteocalcin" evidence="5">
    <location>
        <begin position="52"/>
        <end position="100"/>
    </location>
</feature>
<feature type="domain" description="Gla" evidence="3">
    <location>
        <begin position="52"/>
        <end position="98"/>
    </location>
</feature>
<feature type="binding site" evidence="1">
    <location>
        <position position="68"/>
    </location>
    <ligand>
        <name>Ca(2+)</name>
        <dbReference type="ChEBI" id="CHEBI:29108"/>
        <label>1</label>
    </ligand>
</feature>
<feature type="binding site" evidence="1">
    <location>
        <position position="72"/>
    </location>
    <ligand>
        <name>Ca(2+)</name>
        <dbReference type="ChEBI" id="CHEBI:29108"/>
        <label>2</label>
    </ligand>
</feature>
<feature type="binding site" evidence="1">
    <location>
        <position position="75"/>
    </location>
    <ligand>
        <name>Ca(2+)</name>
        <dbReference type="ChEBI" id="CHEBI:29108"/>
        <label>2</label>
    </ligand>
</feature>
<feature type="binding site" evidence="1">
    <location>
        <position position="75"/>
    </location>
    <ligand>
        <name>Ca(2+)</name>
        <dbReference type="ChEBI" id="CHEBI:29108"/>
        <label>3</label>
    </ligand>
</feature>
<feature type="binding site" evidence="1">
    <location>
        <position position="81"/>
    </location>
    <ligand>
        <name>Ca(2+)</name>
        <dbReference type="ChEBI" id="CHEBI:29108"/>
        <label>3</label>
    </ligand>
</feature>
<feature type="site" description="Not hydroxylated" evidence="5">
    <location>
        <position position="60"/>
    </location>
</feature>
<feature type="modified residue" description="4-carboxyglutamate; partial" evidence="3 5">
    <location>
        <position position="68"/>
    </location>
</feature>
<feature type="modified residue" description="4-carboxyglutamate" evidence="3 5">
    <location>
        <position position="72"/>
    </location>
</feature>
<feature type="modified residue" description="4-carboxyglutamate" evidence="3 5">
    <location>
        <position position="75"/>
    </location>
</feature>
<feature type="disulfide bond" evidence="9">
    <location>
        <begin position="74"/>
        <end position="80"/>
    </location>
</feature>
<feature type="sequence variant" id="VAR_038743" description="In dbSNP:rs34702397." evidence="6">
    <original>R</original>
    <variation>Q</variation>
    <location>
        <position position="94"/>
    </location>
</feature>
<feature type="sequence conflict" description="In Ref. 1; CAA27763." evidence="8" ref="1">
    <location>
        <begin position="33"/>
        <end position="34"/>
    </location>
</feature>
<name>OSTCN_HUMAN</name>
<gene>
    <name type="primary">BGLAP</name>
</gene>
<reference key="1">
    <citation type="journal article" date="1986" name="EMBO J.">
        <title>Isolation of the human gene for bone gla protein utilizing mouse and rat cDNA clones.</title>
        <authorList>
            <person name="Celeste A.J."/>
            <person name="Buecker J.L."/>
            <person name="Kriz R."/>
            <person name="Wang E.A."/>
            <person name="Wozney J.M."/>
        </authorList>
    </citation>
    <scope>NUCLEOTIDE SEQUENCE [GENOMIC DNA]</scope>
    <scope>FUNCTION</scope>
</reference>
<reference key="2">
    <citation type="journal article" date="1990" name="Nucleic Acids Res.">
        <title>The cDNA and derived amino acid sequences of human and bovine bone Gla protein.</title>
        <authorList>
            <person name="Kiefer M.C."/>
            <person name="Saphire A.C.S."/>
            <person name="Bauer D.M."/>
            <person name="Barr P.J."/>
        </authorList>
    </citation>
    <scope>NUCLEOTIDE SEQUENCE [MRNA]</scope>
</reference>
<reference key="3">
    <citation type="submission" date="2005-04" db="EMBL/GenBank/DDBJ databases">
        <authorList>
            <consortium name="SeattleSNPs variation discovery resource"/>
        </authorList>
    </citation>
    <scope>NUCLEOTIDE SEQUENCE [GENOMIC DNA]</scope>
    <scope>VARIANT GLN-94</scope>
</reference>
<reference key="4">
    <citation type="journal article" date="2006" name="Nature">
        <title>The DNA sequence and biological annotation of human chromosome 1.</title>
        <authorList>
            <person name="Gregory S.G."/>
            <person name="Barlow K.F."/>
            <person name="McLay K.E."/>
            <person name="Kaul R."/>
            <person name="Swarbreck D."/>
            <person name="Dunham A."/>
            <person name="Scott C.E."/>
            <person name="Howe K.L."/>
            <person name="Woodfine K."/>
            <person name="Spencer C.C.A."/>
            <person name="Jones M.C."/>
            <person name="Gillson C."/>
            <person name="Searle S."/>
            <person name="Zhou Y."/>
            <person name="Kokocinski F."/>
            <person name="McDonald L."/>
            <person name="Evans R."/>
            <person name="Phillips K."/>
            <person name="Atkinson A."/>
            <person name="Cooper R."/>
            <person name="Jones C."/>
            <person name="Hall R.E."/>
            <person name="Andrews T.D."/>
            <person name="Lloyd C."/>
            <person name="Ainscough R."/>
            <person name="Almeida J.P."/>
            <person name="Ambrose K.D."/>
            <person name="Anderson F."/>
            <person name="Andrew R.W."/>
            <person name="Ashwell R.I.S."/>
            <person name="Aubin K."/>
            <person name="Babbage A.K."/>
            <person name="Bagguley C.L."/>
            <person name="Bailey J."/>
            <person name="Beasley H."/>
            <person name="Bethel G."/>
            <person name="Bird C.P."/>
            <person name="Bray-Allen S."/>
            <person name="Brown J.Y."/>
            <person name="Brown A.J."/>
            <person name="Buckley D."/>
            <person name="Burton J."/>
            <person name="Bye J."/>
            <person name="Carder C."/>
            <person name="Chapman J.C."/>
            <person name="Clark S.Y."/>
            <person name="Clarke G."/>
            <person name="Clee C."/>
            <person name="Cobley V."/>
            <person name="Collier R.E."/>
            <person name="Corby N."/>
            <person name="Coville G.J."/>
            <person name="Davies J."/>
            <person name="Deadman R."/>
            <person name="Dunn M."/>
            <person name="Earthrowl M."/>
            <person name="Ellington A.G."/>
            <person name="Errington H."/>
            <person name="Frankish A."/>
            <person name="Frankland J."/>
            <person name="French L."/>
            <person name="Garner P."/>
            <person name="Garnett J."/>
            <person name="Gay L."/>
            <person name="Ghori M.R.J."/>
            <person name="Gibson R."/>
            <person name="Gilby L.M."/>
            <person name="Gillett W."/>
            <person name="Glithero R.J."/>
            <person name="Grafham D.V."/>
            <person name="Griffiths C."/>
            <person name="Griffiths-Jones S."/>
            <person name="Grocock R."/>
            <person name="Hammond S."/>
            <person name="Harrison E.S.I."/>
            <person name="Hart E."/>
            <person name="Haugen E."/>
            <person name="Heath P.D."/>
            <person name="Holmes S."/>
            <person name="Holt K."/>
            <person name="Howden P.J."/>
            <person name="Hunt A.R."/>
            <person name="Hunt S.E."/>
            <person name="Hunter G."/>
            <person name="Isherwood J."/>
            <person name="James R."/>
            <person name="Johnson C."/>
            <person name="Johnson D."/>
            <person name="Joy A."/>
            <person name="Kay M."/>
            <person name="Kershaw J.K."/>
            <person name="Kibukawa M."/>
            <person name="Kimberley A.M."/>
            <person name="King A."/>
            <person name="Knights A.J."/>
            <person name="Lad H."/>
            <person name="Laird G."/>
            <person name="Lawlor S."/>
            <person name="Leongamornlert D.A."/>
            <person name="Lloyd D.M."/>
            <person name="Loveland J."/>
            <person name="Lovell J."/>
            <person name="Lush M.J."/>
            <person name="Lyne R."/>
            <person name="Martin S."/>
            <person name="Mashreghi-Mohammadi M."/>
            <person name="Matthews L."/>
            <person name="Matthews N.S.W."/>
            <person name="McLaren S."/>
            <person name="Milne S."/>
            <person name="Mistry S."/>
            <person name="Moore M.J.F."/>
            <person name="Nickerson T."/>
            <person name="O'Dell C.N."/>
            <person name="Oliver K."/>
            <person name="Palmeiri A."/>
            <person name="Palmer S.A."/>
            <person name="Parker A."/>
            <person name="Patel D."/>
            <person name="Pearce A.V."/>
            <person name="Peck A.I."/>
            <person name="Pelan S."/>
            <person name="Phelps K."/>
            <person name="Phillimore B.J."/>
            <person name="Plumb R."/>
            <person name="Rajan J."/>
            <person name="Raymond C."/>
            <person name="Rouse G."/>
            <person name="Saenphimmachak C."/>
            <person name="Sehra H.K."/>
            <person name="Sheridan E."/>
            <person name="Shownkeen R."/>
            <person name="Sims S."/>
            <person name="Skuce C.D."/>
            <person name="Smith M."/>
            <person name="Steward C."/>
            <person name="Subramanian S."/>
            <person name="Sycamore N."/>
            <person name="Tracey A."/>
            <person name="Tromans A."/>
            <person name="Van Helmond Z."/>
            <person name="Wall M."/>
            <person name="Wallis J.M."/>
            <person name="White S."/>
            <person name="Whitehead S.L."/>
            <person name="Wilkinson J.E."/>
            <person name="Willey D.L."/>
            <person name="Williams H."/>
            <person name="Wilming L."/>
            <person name="Wray P.W."/>
            <person name="Wu Z."/>
            <person name="Coulson A."/>
            <person name="Vaudin M."/>
            <person name="Sulston J.E."/>
            <person name="Durbin R.M."/>
            <person name="Hubbard T."/>
            <person name="Wooster R."/>
            <person name="Dunham I."/>
            <person name="Carter N.P."/>
            <person name="McVean G."/>
            <person name="Ross M.T."/>
            <person name="Harrow J."/>
            <person name="Olson M.V."/>
            <person name="Beck S."/>
            <person name="Rogers J."/>
            <person name="Bentley D.R."/>
        </authorList>
    </citation>
    <scope>NUCLEOTIDE SEQUENCE [LARGE SCALE GENOMIC DNA]</scope>
</reference>
<reference key="5">
    <citation type="submission" date="2005-09" db="EMBL/GenBank/DDBJ databases">
        <authorList>
            <person name="Mural R.J."/>
            <person name="Istrail S."/>
            <person name="Sutton G.G."/>
            <person name="Florea L."/>
            <person name="Halpern A.L."/>
            <person name="Mobarry C.M."/>
            <person name="Lippert R."/>
            <person name="Walenz B."/>
            <person name="Shatkay H."/>
            <person name="Dew I."/>
            <person name="Miller J.R."/>
            <person name="Flanigan M.J."/>
            <person name="Edwards N.J."/>
            <person name="Bolanos R."/>
            <person name="Fasulo D."/>
            <person name="Halldorsson B.V."/>
            <person name="Hannenhalli S."/>
            <person name="Turner R."/>
            <person name="Yooseph S."/>
            <person name="Lu F."/>
            <person name="Nusskern D.R."/>
            <person name="Shue B.C."/>
            <person name="Zheng X.H."/>
            <person name="Zhong F."/>
            <person name="Delcher A.L."/>
            <person name="Huson D.H."/>
            <person name="Kravitz S.A."/>
            <person name="Mouchard L."/>
            <person name="Reinert K."/>
            <person name="Remington K.A."/>
            <person name="Clark A.G."/>
            <person name="Waterman M.S."/>
            <person name="Eichler E.E."/>
            <person name="Adams M.D."/>
            <person name="Hunkapiller M.W."/>
            <person name="Myers E.W."/>
            <person name="Venter J.C."/>
        </authorList>
    </citation>
    <scope>NUCLEOTIDE SEQUENCE [LARGE SCALE GENOMIC DNA]</scope>
</reference>
<reference key="6">
    <citation type="journal article" date="2004" name="Genome Res.">
        <title>The status, quality, and expansion of the NIH full-length cDNA project: the Mammalian Gene Collection (MGC).</title>
        <authorList>
            <consortium name="The MGC Project Team"/>
        </authorList>
    </citation>
    <scope>NUCLEOTIDE SEQUENCE [LARGE SCALE MRNA]</scope>
</reference>
<reference key="7">
    <citation type="journal article" date="1980" name="J. Biol. Chem.">
        <title>Isolation and sequence of the vitamin K-dependent protein from human bone. Undercarboxylation of the first glutamic acid residue.</title>
        <authorList>
            <person name="Poser J.W."/>
            <person name="Esch F.S."/>
            <person name="Ling N.C."/>
            <person name="Price P.A."/>
        </authorList>
    </citation>
    <scope>PROTEIN SEQUENCE OF 52-100</scope>
    <scope>FUNCTION</scope>
    <scope>SUBCELLULAR LOCATION</scope>
    <scope>GAMMA-CARBOXYGLUTAMATION AT GLU-68; GLU-72 AND GLU-75</scope>
    <scope>LACK OF HYDROXYLATION AT PRO-60</scope>
</reference>